<reference key="1">
    <citation type="submission" date="1999-04" db="EMBL/GenBank/DDBJ databases">
        <title>Structural analysis of Arabidopsis thaliana chromosome 5. XI.</title>
        <authorList>
            <person name="Kaneko T."/>
            <person name="Katoh T."/>
            <person name="Asamizu E."/>
            <person name="Sato S."/>
            <person name="Nakamura Y."/>
            <person name="Kotani H."/>
            <person name="Tabata S."/>
        </authorList>
    </citation>
    <scope>NUCLEOTIDE SEQUENCE [LARGE SCALE GENOMIC DNA]</scope>
    <source>
        <strain>cv. Columbia</strain>
    </source>
</reference>
<reference key="2">
    <citation type="journal article" date="2017" name="Plant J.">
        <title>Araport11: a complete reannotation of the Arabidopsis thaliana reference genome.</title>
        <authorList>
            <person name="Cheng C.Y."/>
            <person name="Krishnakumar V."/>
            <person name="Chan A.P."/>
            <person name="Thibaud-Nissen F."/>
            <person name="Schobel S."/>
            <person name="Town C.D."/>
        </authorList>
    </citation>
    <scope>GENOME REANNOTATION</scope>
    <source>
        <strain>cv. Columbia</strain>
    </source>
</reference>
<reference key="3">
    <citation type="journal article" date="2003" name="Science">
        <title>Empirical analysis of transcriptional activity in the Arabidopsis genome.</title>
        <authorList>
            <person name="Yamada K."/>
            <person name="Lim J."/>
            <person name="Dale J.M."/>
            <person name="Chen H."/>
            <person name="Shinn P."/>
            <person name="Palm C.J."/>
            <person name="Southwick A.M."/>
            <person name="Wu H.C."/>
            <person name="Kim C.J."/>
            <person name="Nguyen M."/>
            <person name="Pham P.K."/>
            <person name="Cheuk R.F."/>
            <person name="Karlin-Newmann G."/>
            <person name="Liu S.X."/>
            <person name="Lam B."/>
            <person name="Sakano H."/>
            <person name="Wu T."/>
            <person name="Yu G."/>
            <person name="Miranda M."/>
            <person name="Quach H.L."/>
            <person name="Tripp M."/>
            <person name="Chang C.H."/>
            <person name="Lee J.M."/>
            <person name="Toriumi M.J."/>
            <person name="Chan M.M."/>
            <person name="Tang C.C."/>
            <person name="Onodera C.S."/>
            <person name="Deng J.M."/>
            <person name="Akiyama K."/>
            <person name="Ansari Y."/>
            <person name="Arakawa T."/>
            <person name="Banh J."/>
            <person name="Banno F."/>
            <person name="Bowser L."/>
            <person name="Brooks S.Y."/>
            <person name="Carninci P."/>
            <person name="Chao Q."/>
            <person name="Choy N."/>
            <person name="Enju A."/>
            <person name="Goldsmith A.D."/>
            <person name="Gurjal M."/>
            <person name="Hansen N.F."/>
            <person name="Hayashizaki Y."/>
            <person name="Johnson-Hopson C."/>
            <person name="Hsuan V.W."/>
            <person name="Iida K."/>
            <person name="Karnes M."/>
            <person name="Khan S."/>
            <person name="Koesema E."/>
            <person name="Ishida J."/>
            <person name="Jiang P.X."/>
            <person name="Jones T."/>
            <person name="Kawai J."/>
            <person name="Kamiya A."/>
            <person name="Meyers C."/>
            <person name="Nakajima M."/>
            <person name="Narusaka M."/>
            <person name="Seki M."/>
            <person name="Sakurai T."/>
            <person name="Satou M."/>
            <person name="Tamse R."/>
            <person name="Vaysberg M."/>
            <person name="Wallender E.K."/>
            <person name="Wong C."/>
            <person name="Yamamura Y."/>
            <person name="Yuan S."/>
            <person name="Shinozaki K."/>
            <person name="Davis R.W."/>
            <person name="Theologis A."/>
            <person name="Ecker J.R."/>
        </authorList>
    </citation>
    <scope>NUCLEOTIDE SEQUENCE [LARGE SCALE MRNA]</scope>
    <source>
        <strain>cv. Columbia</strain>
    </source>
</reference>
<reference key="4">
    <citation type="journal article" date="1999" name="Plant J.">
        <title>The GRAS gene family in Arabidopsis: sequence characterization and basic expression analysis of the SCARECROW-LIKE genes.</title>
        <authorList>
            <person name="Pysh L.D."/>
            <person name="Wysocka-Diller J.W."/>
            <person name="Camilleri C."/>
            <person name="Bouchez D."/>
            <person name="Benfey P.N."/>
        </authorList>
    </citation>
    <scope>NUCLEOTIDE SEQUENCE [MRNA] OF 406-610</scope>
    <scope>TISSUE SPECIFICITY</scope>
</reference>
<reference key="5">
    <citation type="journal article" date="2004" name="Plant Mol. Biol.">
        <title>Genome-wide analysis of the GRAS gene family in rice and Arabidopsis.</title>
        <authorList>
            <person name="Tian C."/>
            <person name="Wan P."/>
            <person name="Sun S."/>
            <person name="Li J."/>
            <person name="Chen M."/>
        </authorList>
    </citation>
    <scope>GENE FAMILY</scope>
</reference>
<reference key="6">
    <citation type="journal article" date="2008" name="Plant Mol. Biol.">
        <title>Large-scale analysis of the GRAS gene family in Arabidopsis thaliana.</title>
        <authorList>
            <person name="Lee M.-H."/>
            <person name="Kim B."/>
            <person name="Song S.-K."/>
            <person name="Heo J.-O."/>
            <person name="Yu N.-I."/>
            <person name="Lee S.A."/>
            <person name="Kim M."/>
            <person name="Kim D.G."/>
            <person name="Sohn S.O."/>
            <person name="Lim C.E."/>
            <person name="Chang K.S."/>
            <person name="Lee M.M."/>
            <person name="Lim J."/>
        </authorList>
    </citation>
    <scope>GENE FAMILY</scope>
    <scope>TISSUE SPECIFICITY</scope>
</reference>
<protein>
    <recommendedName>
        <fullName>Scarecrow-like protein 11</fullName>
        <shortName>AtSCL11</shortName>
    </recommendedName>
    <alternativeName>
        <fullName>GRAS family protein 31</fullName>
        <shortName>AtGRAS-31</shortName>
    </alternativeName>
</protein>
<keyword id="KW-0539">Nucleus</keyword>
<keyword id="KW-1185">Reference proteome</keyword>
<keyword id="KW-0804">Transcription</keyword>
<keyword id="KW-0805">Transcription regulation</keyword>
<dbReference type="EMBL" id="AB025604">
    <property type="protein sequence ID" value="BAA97480.1"/>
    <property type="molecule type" value="Genomic_DNA"/>
</dbReference>
<dbReference type="EMBL" id="CP002688">
    <property type="protein sequence ID" value="AED97191.1"/>
    <property type="molecule type" value="Genomic_DNA"/>
</dbReference>
<dbReference type="EMBL" id="AY035001">
    <property type="protein sequence ID" value="AAK59506.1"/>
    <property type="molecule type" value="mRNA"/>
</dbReference>
<dbReference type="EMBL" id="AY062942">
    <property type="protein sequence ID" value="AAL33772.1"/>
    <property type="molecule type" value="mRNA"/>
</dbReference>
<dbReference type="EMBL" id="AF036307">
    <property type="protein sequence ID" value="AAD24410.1"/>
    <property type="molecule type" value="mRNA"/>
</dbReference>
<dbReference type="PIR" id="T51233">
    <property type="entry name" value="T51233"/>
</dbReference>
<dbReference type="RefSeq" id="NP_200753.1">
    <property type="nucleotide sequence ID" value="NM_125336.2"/>
</dbReference>
<dbReference type="SMR" id="Q9LTI5"/>
<dbReference type="BioGRID" id="21308">
    <property type="interactions" value="1"/>
</dbReference>
<dbReference type="FunCoup" id="Q9LTI5">
    <property type="interactions" value="6"/>
</dbReference>
<dbReference type="IntAct" id="Q9LTI5">
    <property type="interactions" value="1"/>
</dbReference>
<dbReference type="STRING" id="3702.Q9LTI5"/>
<dbReference type="PaxDb" id="3702-AT5G59450.1"/>
<dbReference type="ProteomicsDB" id="232801"/>
<dbReference type="EnsemblPlants" id="AT5G59450.1">
    <property type="protein sequence ID" value="AT5G59450.1"/>
    <property type="gene ID" value="AT5G59450"/>
</dbReference>
<dbReference type="GeneID" id="836064"/>
<dbReference type="Gramene" id="AT5G59450.1">
    <property type="protein sequence ID" value="AT5G59450.1"/>
    <property type="gene ID" value="AT5G59450"/>
</dbReference>
<dbReference type="KEGG" id="ath:AT5G59450"/>
<dbReference type="Araport" id="AT5G59450"/>
<dbReference type="TAIR" id="AT5G59450"/>
<dbReference type="eggNOG" id="ENOG502QUZA">
    <property type="taxonomic scope" value="Eukaryota"/>
</dbReference>
<dbReference type="HOGENOM" id="CLU_011924_2_1_1"/>
<dbReference type="InParanoid" id="Q9LTI5"/>
<dbReference type="OMA" id="HTCPIYV"/>
<dbReference type="PhylomeDB" id="Q9LTI5"/>
<dbReference type="PRO" id="PR:Q9LTI5"/>
<dbReference type="Proteomes" id="UP000006548">
    <property type="component" value="Chromosome 5"/>
</dbReference>
<dbReference type="ExpressionAtlas" id="Q9LTI5">
    <property type="expression patterns" value="baseline and differential"/>
</dbReference>
<dbReference type="GO" id="GO:0005634">
    <property type="term" value="C:nucleus"/>
    <property type="evidence" value="ECO:0007669"/>
    <property type="project" value="UniProtKB-SubCell"/>
</dbReference>
<dbReference type="GO" id="GO:0003700">
    <property type="term" value="F:DNA-binding transcription factor activity"/>
    <property type="evidence" value="ECO:0000250"/>
    <property type="project" value="TAIR"/>
</dbReference>
<dbReference type="GO" id="GO:0006355">
    <property type="term" value="P:regulation of DNA-templated transcription"/>
    <property type="evidence" value="ECO:0000304"/>
    <property type="project" value="TAIR"/>
</dbReference>
<dbReference type="InterPro" id="IPR005202">
    <property type="entry name" value="TF_GRAS"/>
</dbReference>
<dbReference type="PANTHER" id="PTHR31636">
    <property type="entry name" value="OSJNBA0084A10.13 PROTEIN-RELATED"/>
    <property type="match status" value="1"/>
</dbReference>
<dbReference type="Pfam" id="PF03514">
    <property type="entry name" value="GRAS"/>
    <property type="match status" value="1"/>
</dbReference>
<dbReference type="PROSITE" id="PS50985">
    <property type="entry name" value="GRAS"/>
    <property type="match status" value="1"/>
</dbReference>
<accession>Q9LTI5</accession>
<accession>Q9XE56</accession>
<organism>
    <name type="scientific">Arabidopsis thaliana</name>
    <name type="common">Mouse-ear cress</name>
    <dbReference type="NCBI Taxonomy" id="3702"/>
    <lineage>
        <taxon>Eukaryota</taxon>
        <taxon>Viridiplantae</taxon>
        <taxon>Streptophyta</taxon>
        <taxon>Embryophyta</taxon>
        <taxon>Tracheophyta</taxon>
        <taxon>Spermatophyta</taxon>
        <taxon>Magnoliopsida</taxon>
        <taxon>eudicotyledons</taxon>
        <taxon>Gunneridae</taxon>
        <taxon>Pentapetalae</taxon>
        <taxon>rosids</taxon>
        <taxon>malvids</taxon>
        <taxon>Brassicales</taxon>
        <taxon>Brassicaceae</taxon>
        <taxon>Camelineae</taxon>
        <taxon>Arabidopsis</taxon>
    </lineage>
</organism>
<evidence type="ECO:0000250" key="1"/>
<evidence type="ECO:0000255" key="2">
    <source>
        <dbReference type="PROSITE-ProRule" id="PRU01191"/>
    </source>
</evidence>
<evidence type="ECO:0000256" key="3">
    <source>
        <dbReference type="SAM" id="MobiDB-lite"/>
    </source>
</evidence>
<evidence type="ECO:0000269" key="4">
    <source>
    </source>
</evidence>
<evidence type="ECO:0000269" key="5">
    <source>
    </source>
</evidence>
<evidence type="ECO:0000305" key="6"/>
<name>SCL11_ARATH</name>
<comment type="function">
    <text evidence="1">Probable transcription factor involved in plant development.</text>
</comment>
<comment type="interaction">
    <interactant intactId="EBI-25517369">
        <id>Q9LTI5</id>
    </interactant>
    <interactant intactId="EBI-963665">
        <id>Q8GXW1</id>
        <label>RGL2</label>
    </interactant>
    <organismsDiffer>false</organismsDiffer>
    <experiments>3</experiments>
</comment>
<comment type="subcellular location">
    <subcellularLocation>
        <location evidence="6">Nucleus</location>
    </subcellularLocation>
</comment>
<comment type="tissue specificity">
    <text evidence="4 5">Highly expressed in roots and at lower levels in leaves and sepals. Expressed in siliques.</text>
</comment>
<comment type="similarity">
    <text evidence="6">Belongs to the GRAS family.</text>
</comment>
<sequence>MDALLQVSVDGFRFENGSGSCCKPRNNLESGNNLFPDFHESQNQSSPNDSPPTVCLDNSPVLKYINDMLMDEEDFVGISRDDLALQAAERSFYEIIQQQSPESDQNTSSSSDQNSGDQDFCFPSTTTDSSALVSSGESQRKYRHRNDEEDDLENNRRNKQPAIFVSEMEELAVKLEHVLLVCKTNQEEEEERTVITKQSTPNRAGRAKGSSNKSKTHKTNTVDLRSLLTQCAQAVASFDQRRATDKLKEIRAHSSSNGDGTQRLAFYFAEALEARITGNISPPVSNPFPSSTTSMVDILKAYKLFVHTCPIYVTDYFAANKSIYELAMKATKLHIVDFGVLYGFQWPCLLRALSKRPGGPPMLRVTGIELPQAGFRPSDRVEETGRRLKRFCDQFNVPFEFNFIAKKWETITLDELMINPGETTVVNCIHRLQYTPDETVSLDSPRDTVLKLFRDINPDLFVFAEINGMYNSPFFMTRFREALFHYSSLFDMFDTTIHAEDEYKNRSLLERELLVRDAMSVISCEGAERFARPETYKQWRVRILRAGFKPATISKQIMKEAKEIVRKRYHRDFVIDSDNNWMLQGWKGRVIYAFSCWKPAEKFTNNNLNI</sequence>
<gene>
    <name type="primary">SCL11</name>
    <name type="ordered locus">At5g59450</name>
    <name type="ORF">F2O15.5</name>
</gene>
<feature type="chain" id="PRO_0000350854" description="Scarecrow-like protein 11">
    <location>
        <begin position="1"/>
        <end position="610"/>
    </location>
</feature>
<feature type="domain" description="GRAS" evidence="2">
    <location>
        <begin position="215"/>
        <end position="598"/>
    </location>
</feature>
<feature type="region of interest" description="Disordered" evidence="3">
    <location>
        <begin position="32"/>
        <end position="54"/>
    </location>
</feature>
<feature type="region of interest" description="Disordered" evidence="3">
    <location>
        <begin position="98"/>
        <end position="159"/>
    </location>
</feature>
<feature type="region of interest" description="Disordered" evidence="3">
    <location>
        <begin position="186"/>
        <end position="220"/>
    </location>
</feature>
<feature type="region of interest" description="Leucine repeat I (LRI)" evidence="2">
    <location>
        <begin position="222"/>
        <end position="283"/>
    </location>
</feature>
<feature type="region of interest" description="VHIID" evidence="2">
    <location>
        <begin position="302"/>
        <end position="367"/>
    </location>
</feature>
<feature type="region of interest" description="Leucine repeat II (LRII)" evidence="2">
    <location>
        <begin position="383"/>
        <end position="415"/>
    </location>
</feature>
<feature type="region of interest" description="PFYRE" evidence="2">
    <location>
        <begin position="424"/>
        <end position="520"/>
    </location>
</feature>
<feature type="region of interest" description="SAW" evidence="2">
    <location>
        <begin position="523"/>
        <end position="598"/>
    </location>
</feature>
<feature type="short sequence motif" description="VHIID" evidence="2">
    <location>
        <begin position="333"/>
        <end position="337"/>
    </location>
</feature>
<feature type="compositionally biased region" description="Low complexity" evidence="3">
    <location>
        <begin position="41"/>
        <end position="52"/>
    </location>
</feature>
<feature type="compositionally biased region" description="Low complexity" evidence="3">
    <location>
        <begin position="99"/>
        <end position="119"/>
    </location>
</feature>
<feature type="compositionally biased region" description="Polar residues" evidence="3">
    <location>
        <begin position="123"/>
        <end position="137"/>
    </location>
</feature>
<feature type="compositionally biased region" description="Polar residues" evidence="3">
    <location>
        <begin position="209"/>
        <end position="220"/>
    </location>
</feature>
<proteinExistence type="evidence at protein level"/>